<evidence type="ECO:0000255" key="1"/>
<evidence type="ECO:0000269" key="2">
    <source>
    </source>
</evidence>
<evidence type="ECO:0000269" key="3">
    <source>
    </source>
</evidence>
<evidence type="ECO:0000269" key="4">
    <source>
    </source>
</evidence>
<evidence type="ECO:0000269" key="5">
    <source>
    </source>
</evidence>
<evidence type="ECO:0000303" key="6">
    <source>
    </source>
</evidence>
<evidence type="ECO:0000303" key="7">
    <source>
    </source>
</evidence>
<evidence type="ECO:0000305" key="8"/>
<evidence type="ECO:0000312" key="9">
    <source>
        <dbReference type="EMBL" id="ANY27392.1"/>
    </source>
</evidence>
<evidence type="ECO:0000312" key="10">
    <source>
        <dbReference type="FlyBase" id="FBgn0035120"/>
    </source>
</evidence>
<evidence type="ECO:0000312" key="11">
    <source>
        <dbReference type="Proteomes" id="UP000000803"/>
    </source>
</evidence>
<organism evidence="11">
    <name type="scientific">Drosophila melanogaster</name>
    <name type="common">Fruit fly</name>
    <dbReference type="NCBI Taxonomy" id="7227"/>
    <lineage>
        <taxon>Eukaryota</taxon>
        <taxon>Metazoa</taxon>
        <taxon>Ecdysozoa</taxon>
        <taxon>Arthropoda</taxon>
        <taxon>Hexapoda</taxon>
        <taxon>Insecta</taxon>
        <taxon>Pterygota</taxon>
        <taxon>Neoptera</taxon>
        <taxon>Endopterygota</taxon>
        <taxon>Diptera</taxon>
        <taxon>Brachycera</taxon>
        <taxon>Muscomorpha</taxon>
        <taxon>Ephydroidea</taxon>
        <taxon>Drosophilidae</taxon>
        <taxon>Drosophila</taxon>
        <taxon>Sophophora</taxon>
    </lineage>
</organism>
<keyword id="KW-0025">Alternative splicing</keyword>
<keyword id="KW-0131">Cell cycle</keyword>
<keyword id="KW-0132">Cell division</keyword>
<keyword id="KW-0175">Coiled coil</keyword>
<keyword id="KW-0963">Cytoplasm</keyword>
<keyword id="KW-0206">Cytoskeleton</keyword>
<keyword id="KW-0469">Meiosis</keyword>
<keyword id="KW-0493">Microtubule</keyword>
<keyword id="KW-0498">Mitosis</keyword>
<keyword id="KW-1185">Reference proteome</keyword>
<name>WAGC_DROME</name>
<reference evidence="11" key="1">
    <citation type="journal article" date="2000" name="Science">
        <title>The genome sequence of Drosophila melanogaster.</title>
        <authorList>
            <person name="Adams M.D."/>
            <person name="Celniker S.E."/>
            <person name="Holt R.A."/>
            <person name="Evans C.A."/>
            <person name="Gocayne J.D."/>
            <person name="Amanatides P.G."/>
            <person name="Scherer S.E."/>
            <person name="Li P.W."/>
            <person name="Hoskins R.A."/>
            <person name="Galle R.F."/>
            <person name="George R.A."/>
            <person name="Lewis S.E."/>
            <person name="Richards S."/>
            <person name="Ashburner M."/>
            <person name="Henderson S.N."/>
            <person name="Sutton G.G."/>
            <person name="Wortman J.R."/>
            <person name="Yandell M.D."/>
            <person name="Zhang Q."/>
            <person name="Chen L.X."/>
            <person name="Brandon R.C."/>
            <person name="Rogers Y.-H.C."/>
            <person name="Blazej R.G."/>
            <person name="Champe M."/>
            <person name="Pfeiffer B.D."/>
            <person name="Wan K.H."/>
            <person name="Doyle C."/>
            <person name="Baxter E.G."/>
            <person name="Helt G."/>
            <person name="Nelson C.R."/>
            <person name="Miklos G.L.G."/>
            <person name="Abril J.F."/>
            <person name="Agbayani A."/>
            <person name="An H.-J."/>
            <person name="Andrews-Pfannkoch C."/>
            <person name="Baldwin D."/>
            <person name="Ballew R.M."/>
            <person name="Basu A."/>
            <person name="Baxendale J."/>
            <person name="Bayraktaroglu L."/>
            <person name="Beasley E.M."/>
            <person name="Beeson K.Y."/>
            <person name="Benos P.V."/>
            <person name="Berman B.P."/>
            <person name="Bhandari D."/>
            <person name="Bolshakov S."/>
            <person name="Borkova D."/>
            <person name="Botchan M.R."/>
            <person name="Bouck J."/>
            <person name="Brokstein P."/>
            <person name="Brottier P."/>
            <person name="Burtis K.C."/>
            <person name="Busam D.A."/>
            <person name="Butler H."/>
            <person name="Cadieu E."/>
            <person name="Center A."/>
            <person name="Chandra I."/>
            <person name="Cherry J.M."/>
            <person name="Cawley S."/>
            <person name="Dahlke C."/>
            <person name="Davenport L.B."/>
            <person name="Davies P."/>
            <person name="de Pablos B."/>
            <person name="Delcher A."/>
            <person name="Deng Z."/>
            <person name="Mays A.D."/>
            <person name="Dew I."/>
            <person name="Dietz S.M."/>
            <person name="Dodson K."/>
            <person name="Doup L.E."/>
            <person name="Downes M."/>
            <person name="Dugan-Rocha S."/>
            <person name="Dunkov B.C."/>
            <person name="Dunn P."/>
            <person name="Durbin K.J."/>
            <person name="Evangelista C.C."/>
            <person name="Ferraz C."/>
            <person name="Ferriera S."/>
            <person name="Fleischmann W."/>
            <person name="Fosler C."/>
            <person name="Gabrielian A.E."/>
            <person name="Garg N.S."/>
            <person name="Gelbart W.M."/>
            <person name="Glasser K."/>
            <person name="Glodek A."/>
            <person name="Gong F."/>
            <person name="Gorrell J.H."/>
            <person name="Gu Z."/>
            <person name="Guan P."/>
            <person name="Harris M."/>
            <person name="Harris N.L."/>
            <person name="Harvey D.A."/>
            <person name="Heiman T.J."/>
            <person name="Hernandez J.R."/>
            <person name="Houck J."/>
            <person name="Hostin D."/>
            <person name="Houston K.A."/>
            <person name="Howland T.J."/>
            <person name="Wei M.-H."/>
            <person name="Ibegwam C."/>
            <person name="Jalali M."/>
            <person name="Kalush F."/>
            <person name="Karpen G.H."/>
            <person name="Ke Z."/>
            <person name="Kennison J.A."/>
            <person name="Ketchum K.A."/>
            <person name="Kimmel B.E."/>
            <person name="Kodira C.D."/>
            <person name="Kraft C.L."/>
            <person name="Kravitz S."/>
            <person name="Kulp D."/>
            <person name="Lai Z."/>
            <person name="Lasko P."/>
            <person name="Lei Y."/>
            <person name="Levitsky A.A."/>
            <person name="Li J.H."/>
            <person name="Li Z."/>
            <person name="Liang Y."/>
            <person name="Lin X."/>
            <person name="Liu X."/>
            <person name="Mattei B."/>
            <person name="McIntosh T.C."/>
            <person name="McLeod M.P."/>
            <person name="McPherson D."/>
            <person name="Merkulov G."/>
            <person name="Milshina N.V."/>
            <person name="Mobarry C."/>
            <person name="Morris J."/>
            <person name="Moshrefi A."/>
            <person name="Mount S.M."/>
            <person name="Moy M."/>
            <person name="Murphy B."/>
            <person name="Murphy L."/>
            <person name="Muzny D.M."/>
            <person name="Nelson D.L."/>
            <person name="Nelson D.R."/>
            <person name="Nelson K.A."/>
            <person name="Nixon K."/>
            <person name="Nusskern D.R."/>
            <person name="Pacleb J.M."/>
            <person name="Palazzolo M."/>
            <person name="Pittman G.S."/>
            <person name="Pan S."/>
            <person name="Pollard J."/>
            <person name="Puri V."/>
            <person name="Reese M.G."/>
            <person name="Reinert K."/>
            <person name="Remington K."/>
            <person name="Saunders R.D.C."/>
            <person name="Scheeler F."/>
            <person name="Shen H."/>
            <person name="Shue B.C."/>
            <person name="Siden-Kiamos I."/>
            <person name="Simpson M."/>
            <person name="Skupski M.P."/>
            <person name="Smith T.J."/>
            <person name="Spier E."/>
            <person name="Spradling A.C."/>
            <person name="Stapleton M."/>
            <person name="Strong R."/>
            <person name="Sun E."/>
            <person name="Svirskas R."/>
            <person name="Tector C."/>
            <person name="Turner R."/>
            <person name="Venter E."/>
            <person name="Wang A.H."/>
            <person name="Wang X."/>
            <person name="Wang Z.-Y."/>
            <person name="Wassarman D.A."/>
            <person name="Weinstock G.M."/>
            <person name="Weissenbach J."/>
            <person name="Williams S.M."/>
            <person name="Woodage T."/>
            <person name="Worley K.C."/>
            <person name="Wu D."/>
            <person name="Yang S."/>
            <person name="Yao Q.A."/>
            <person name="Ye J."/>
            <person name="Yeh R.-F."/>
            <person name="Zaveri J.S."/>
            <person name="Zhan M."/>
            <person name="Zhang G."/>
            <person name="Zhao Q."/>
            <person name="Zheng L."/>
            <person name="Zheng X.H."/>
            <person name="Zhong F.N."/>
            <person name="Zhong W."/>
            <person name="Zhou X."/>
            <person name="Zhu S.C."/>
            <person name="Zhu X."/>
            <person name="Smith H.O."/>
            <person name="Gibbs R.A."/>
            <person name="Myers E.W."/>
            <person name="Rubin G.M."/>
            <person name="Venter J.C."/>
        </authorList>
    </citation>
    <scope>NUCLEOTIDE SEQUENCE [LARGE SCALE GENOMIC DNA]</scope>
    <source>
        <strain evidence="11">Berkeley</strain>
    </source>
</reference>
<reference evidence="11" key="2">
    <citation type="journal article" date="2002" name="Genome Biol.">
        <title>Annotation of the Drosophila melanogaster euchromatic genome: a systematic review.</title>
        <authorList>
            <person name="Misra S."/>
            <person name="Crosby M.A."/>
            <person name="Mungall C.J."/>
            <person name="Matthews B.B."/>
            <person name="Campbell K.S."/>
            <person name="Hradecky P."/>
            <person name="Huang Y."/>
            <person name="Kaminker J.S."/>
            <person name="Millburn G.H."/>
            <person name="Prochnik S.E."/>
            <person name="Smith C.D."/>
            <person name="Tupy J.L."/>
            <person name="Whitfield E.J."/>
            <person name="Bayraktaroglu L."/>
            <person name="Berman B.P."/>
            <person name="Bettencourt B.R."/>
            <person name="Celniker S.E."/>
            <person name="de Grey A.D.N.J."/>
            <person name="Drysdale R.A."/>
            <person name="Harris N.L."/>
            <person name="Richter J."/>
            <person name="Russo S."/>
            <person name="Schroeder A.J."/>
            <person name="Shu S.Q."/>
            <person name="Stapleton M."/>
            <person name="Yamada C."/>
            <person name="Ashburner M."/>
            <person name="Gelbart W.M."/>
            <person name="Rubin G.M."/>
            <person name="Lewis S.E."/>
        </authorList>
    </citation>
    <scope>GENOME REANNOTATION</scope>
    <source>
        <strain evidence="11">Berkeley</strain>
    </source>
</reference>
<reference evidence="9" key="3">
    <citation type="submission" date="2016-07" db="EMBL/GenBank/DDBJ databases">
        <authorList>
            <person name="Florea S."/>
            <person name="Webb J.S."/>
            <person name="Jaromczyk J."/>
            <person name="Schardl C.L."/>
        </authorList>
    </citation>
    <scope>NUCLEOTIDE SEQUENCE [LARGE SCALE MRNA] (ISOFORM C)</scope>
</reference>
<reference evidence="8" key="4">
    <citation type="journal article" date="2009" name="J. Cell Biol.">
        <title>Wac: a new Augmin subunit required for chromosome alignment but not for acentrosomal microtubule assembly in female meiosis.</title>
        <authorList>
            <person name="Meireles A.M."/>
            <person name="Fisher K.H."/>
            <person name="Colombie N."/>
            <person name="Wakefield J.G."/>
            <person name="Ohkura H."/>
        </authorList>
    </citation>
    <scope>FUNCTION</scope>
    <scope>IDENTIFICATION IN THE AUGMIN COMPLEX</scope>
    <scope>INTERACTION WITH DGT2</scope>
    <scope>SUBCELLULAR LOCATION</scope>
    <scope>TISSUE SPECIFICITY</scope>
    <scope>DEVELOPMENTAL STAGE</scope>
    <scope>DISRUPTION PHENOTYPE</scope>
</reference>
<reference evidence="8" key="5">
    <citation type="journal article" date="2009" name="Proc. Natl. Acad. Sci. U.S.A.">
        <title>The augmin complex plays a critical role in spindle microtubule generation for mitotic progression and cytokinesis in human cells.</title>
        <authorList>
            <person name="Uehara R."/>
            <person name="Nozawa R.-S."/>
            <person name="Tomioka A."/>
            <person name="Petry S."/>
            <person name="Vale R.D."/>
            <person name="Obuse C."/>
            <person name="Goshima G."/>
        </authorList>
    </citation>
    <scope>IDENTIFICATION IN THE AUGMIN COMPLEX</scope>
    <scope>SUBCELLULAR LOCATION</scope>
    <scope>IDENTIFICATION BY MASS SPECTROMETRY</scope>
</reference>
<reference evidence="8" key="6">
    <citation type="journal article" date="2013" name="PLoS Genet.">
        <title>Meiosis-specific stable binding of augmin to acentrosomal spindle poles promotes biased microtubule assembly in oocytes.</title>
        <authorList>
            <person name="Colombie N."/>
            <person name="Gluszek A.A."/>
            <person name="Meireles A.M."/>
            <person name="Ohkura H."/>
        </authorList>
    </citation>
    <scope>FUNCTION</scope>
    <scope>SUBCELLULAR LOCATION</scope>
    <scope>DISRUPTION PHENOTYPE</scope>
</reference>
<reference evidence="8" key="7">
    <citation type="journal article" date="2014" name="Open Biol.">
        <title>Differing requirements for Augmin in male meiotic and mitotic spindle formation in Drosophila.</title>
        <authorList>
            <person name="Savoian M.S."/>
            <person name="Glover D.M."/>
        </authorList>
    </citation>
    <scope>FUNCTION</scope>
    <scope>DISRUPTION PHENOTYPE</scope>
</reference>
<protein>
    <recommendedName>
        <fullName evidence="8">Augmin complex subunit wac</fullName>
    </recommendedName>
    <alternativeName>
        <fullName evidence="6">wee Augmin component</fullName>
    </alternativeName>
</protein>
<gene>
    <name evidence="6 10" type="primary">wac</name>
    <name evidence="7" type="synonym">dgt8</name>
    <name evidence="10" type="ORF">CG13879</name>
</gene>
<proteinExistence type="evidence at protein level"/>
<dbReference type="EMBL" id="AE014296">
    <property type="protein sequence ID" value="AAF47365.2"/>
    <property type="molecule type" value="Genomic_DNA"/>
</dbReference>
<dbReference type="EMBL" id="AE014296">
    <property type="protein sequence ID" value="AGB93889.1"/>
    <property type="molecule type" value="Genomic_DNA"/>
</dbReference>
<dbReference type="EMBL" id="AE014296">
    <property type="protein sequence ID" value="ACZ94578.1"/>
    <property type="molecule type" value="Genomic_DNA"/>
</dbReference>
<dbReference type="EMBL" id="KX531582">
    <property type="protein sequence ID" value="ANY27392.1"/>
    <property type="molecule type" value="mRNA"/>
</dbReference>
<dbReference type="EMBL" id="KX531622">
    <property type="protein sequence ID" value="ANY27432.1"/>
    <property type="molecule type" value="mRNA"/>
</dbReference>
<dbReference type="RefSeq" id="NP_001163306.1">
    <molecule id="Q9W0S8-2"/>
    <property type="nucleotide sequence ID" value="NM_001169835.1"/>
</dbReference>
<dbReference type="RefSeq" id="NP_001261194.1">
    <molecule id="Q9W0S8-1"/>
    <property type="nucleotide sequence ID" value="NM_001274265.1"/>
</dbReference>
<dbReference type="RefSeq" id="NP_612020.2">
    <molecule id="Q9W0S8-1"/>
    <property type="nucleotide sequence ID" value="NM_138176.3"/>
</dbReference>
<dbReference type="SMR" id="Q9W0S8"/>
<dbReference type="ComplexPortal" id="CPX-9861">
    <property type="entry name" value="Augmin complex"/>
</dbReference>
<dbReference type="FunCoup" id="Q9W0S8">
    <property type="interactions" value="17"/>
</dbReference>
<dbReference type="IntAct" id="Q9W0S8">
    <property type="interactions" value="14"/>
</dbReference>
<dbReference type="STRING" id="7227.FBpp0304416"/>
<dbReference type="PaxDb" id="7227-FBpp0304416"/>
<dbReference type="DNASU" id="38044"/>
<dbReference type="EnsemblMetazoa" id="FBtr0289972">
    <molecule id="Q9W0S8-1"/>
    <property type="protein sequence ID" value="FBpp0288410"/>
    <property type="gene ID" value="FBgn0035120"/>
</dbReference>
<dbReference type="EnsemblMetazoa" id="FBtr0300711">
    <molecule id="Q9W0S8-2"/>
    <property type="protein sequence ID" value="FBpp0289935"/>
    <property type="gene ID" value="FBgn0035120"/>
</dbReference>
<dbReference type="EnsemblMetazoa" id="FBtr0332106">
    <molecule id="Q9W0S8-1"/>
    <property type="protein sequence ID" value="FBpp0304416"/>
    <property type="gene ID" value="FBgn0035120"/>
</dbReference>
<dbReference type="GeneID" id="38044"/>
<dbReference type="KEGG" id="dme:Dmel_CG13879"/>
<dbReference type="UCSC" id="CG13879-RB">
    <molecule id="Q9W0S8-1"/>
    <property type="organism name" value="d. melanogaster"/>
</dbReference>
<dbReference type="AGR" id="FB:FBgn0035120"/>
<dbReference type="CTD" id="51322"/>
<dbReference type="FlyBase" id="FBgn0035120">
    <property type="gene designation" value="wac"/>
</dbReference>
<dbReference type="VEuPathDB" id="VectorBase:FBgn0035120"/>
<dbReference type="eggNOG" id="ENOG502T8ST">
    <property type="taxonomic scope" value="Eukaryota"/>
</dbReference>
<dbReference type="HOGENOM" id="CLU_1760722_0_0_1"/>
<dbReference type="InParanoid" id="Q9W0S8"/>
<dbReference type="OMA" id="LHIHDFN"/>
<dbReference type="OrthoDB" id="8036393at2759"/>
<dbReference type="PhylomeDB" id="Q9W0S8"/>
<dbReference type="BioGRID-ORCS" id="38044">
    <property type="hits" value="0 hits in 1 CRISPR screen"/>
</dbReference>
<dbReference type="GenomeRNAi" id="38044"/>
<dbReference type="PRO" id="PR:Q9W0S8"/>
<dbReference type="Proteomes" id="UP000000803">
    <property type="component" value="Chromosome 3L"/>
</dbReference>
<dbReference type="Bgee" id="FBgn0035120">
    <property type="expression patterns" value="Expressed in spermatocyte in testis and 65 other cell types or tissues"/>
</dbReference>
<dbReference type="ExpressionAtlas" id="Q9W0S8">
    <property type="expression patterns" value="baseline and differential"/>
</dbReference>
<dbReference type="GO" id="GO:0005737">
    <property type="term" value="C:cytoplasm"/>
    <property type="evidence" value="ECO:0007669"/>
    <property type="project" value="UniProtKB-KW"/>
</dbReference>
<dbReference type="GO" id="GO:0070652">
    <property type="term" value="C:HAUS complex"/>
    <property type="evidence" value="ECO:0000314"/>
    <property type="project" value="FlyBase"/>
</dbReference>
<dbReference type="GO" id="GO:0072687">
    <property type="term" value="C:meiotic spindle"/>
    <property type="evidence" value="ECO:0000314"/>
    <property type="project" value="FlyBase"/>
</dbReference>
<dbReference type="GO" id="GO:0005874">
    <property type="term" value="C:microtubule"/>
    <property type="evidence" value="ECO:0007669"/>
    <property type="project" value="UniProtKB-KW"/>
</dbReference>
<dbReference type="GO" id="GO:0032991">
    <property type="term" value="C:protein-containing complex"/>
    <property type="evidence" value="ECO:0000314"/>
    <property type="project" value="FlyBase"/>
</dbReference>
<dbReference type="GO" id="GO:0005819">
    <property type="term" value="C:spindle"/>
    <property type="evidence" value="ECO:0000314"/>
    <property type="project" value="FlyBase"/>
</dbReference>
<dbReference type="GO" id="GO:0000922">
    <property type="term" value="C:spindle pole"/>
    <property type="evidence" value="ECO:0007669"/>
    <property type="project" value="UniProtKB-SubCell"/>
</dbReference>
<dbReference type="GO" id="GO:0008017">
    <property type="term" value="F:microtubule binding"/>
    <property type="evidence" value="ECO:0000314"/>
    <property type="project" value="FlyBase"/>
</dbReference>
<dbReference type="GO" id="GO:0051301">
    <property type="term" value="P:cell division"/>
    <property type="evidence" value="ECO:0000315"/>
    <property type="project" value="FlyBase"/>
</dbReference>
<dbReference type="GO" id="GO:0007143">
    <property type="term" value="P:female meiotic nuclear division"/>
    <property type="evidence" value="ECO:0000315"/>
    <property type="project" value="FlyBase"/>
</dbReference>
<dbReference type="GO" id="GO:0090307">
    <property type="term" value="P:mitotic spindle assembly"/>
    <property type="evidence" value="ECO:0000305"/>
    <property type="project" value="FlyBase"/>
</dbReference>
<dbReference type="GO" id="GO:0090221">
    <property type="term" value="P:mitotic spindle-templated microtubule nucleation"/>
    <property type="evidence" value="ECO:0000314"/>
    <property type="project" value="FlyBase"/>
</dbReference>
<dbReference type="GO" id="GO:0051225">
    <property type="term" value="P:spindle assembly"/>
    <property type="evidence" value="ECO:0000315"/>
    <property type="project" value="FlyBase"/>
</dbReference>
<dbReference type="GO" id="GO:0007056">
    <property type="term" value="P:spindle assembly involved in female meiosis"/>
    <property type="evidence" value="ECO:0000315"/>
    <property type="project" value="FlyBase"/>
</dbReference>
<sequence>MQNLKIQEEVNSLMRLGQHFDDQLKLASVELGDFSDDDLALLDKCAQYYSLLHIHDINLNYLRDFYCAKKRECIENRQTTVQQRVELQRILSSIEEATRDVVMLERFNAAAEERLIPDIVVMQRNAQQLATKQALLDRQKTLKIPKDFSIESVIEKVDSLEQR</sequence>
<accession>Q9W0S8</accession>
<accession>E1JHV2</accession>
<feature type="chain" id="PRO_0000438658" description="Augmin complex subunit wac" evidence="8">
    <location>
        <begin position="1"/>
        <end position="163"/>
    </location>
</feature>
<feature type="coiled-coil region" evidence="1">
    <location>
        <begin position="86"/>
        <end position="115"/>
    </location>
</feature>
<feature type="splice variant" id="VSP_058701" description="In isoform C." evidence="8">
    <location>
        <begin position="1"/>
        <end position="13"/>
    </location>
</feature>
<comment type="function">
    <text evidence="2 4 5">As part of the augmin complex, plays a role in centrosome-independent generation of spindle microtubules (PubMed:19289792). The complex is required for mitotic spindle assembly through its involvement in localizing gamma-tubulin to spindle microtubules (PubMed:19289792). wac is dispensable for somatic mitosis and for assembly of spindle microtubules in oocytes during female meiosis but is required during female meiosis for chromosome alignment and segregation (PubMed:19289792). It is required for microtubule assembly near spindle poles in oocytes (PubMed:23785300). It is also required for acentrosomal microtubule nucleation and meiotic spindle formation during male meiosis (PubMed:24829288). wac binds to microtubules in vitro (PubMed:19289792).</text>
</comment>
<comment type="subunit">
    <text evidence="2 3">Component of the augmin complex composed of dgt2, dgt3, dgt4, dgt5, dgt6, msd1, msd5 and wac (PubMed:19289792, PubMed:19369198). The complex interacts directly or indirectly with microtubules and is required for centrosome-independent generation of spindle microtubules (PubMed:19289792). wac interacts directly (via coiled coil) with dgt2 (PubMed:19289792).</text>
</comment>
<comment type="interaction">
    <interactant intactId="EBI-180262">
        <id>Q9W0S8</id>
    </interactant>
    <interactant intactId="EBI-84322">
        <id>Q9VKD6</id>
        <label>dgt2</label>
    </interactant>
    <organismsDiffer>false</organismsDiffer>
    <experiments>4</experiments>
</comment>
<comment type="interaction">
    <interactant intactId="EBI-180262">
        <id>Q9W0S8</id>
    </interactant>
    <interactant intactId="EBI-186540">
        <id>Q9VAP2</id>
        <label>dgt6</label>
    </interactant>
    <organismsDiffer>false</organismsDiffer>
    <experiments>2</experiments>
</comment>
<comment type="subcellular location">
    <subcellularLocation>
        <location evidence="2 3">Cytoplasm</location>
        <location evidence="2 3">Cytoskeleton</location>
        <location evidence="2 3">Spindle</location>
    </subcellularLocation>
    <subcellularLocation>
        <location evidence="4">Cytoplasm</location>
        <location evidence="4">Cytoskeleton</location>
        <location evidence="4">Spindle pole</location>
    </subcellularLocation>
    <text evidence="4">Enriched at spindle poles during meiosis in oocytes.</text>
</comment>
<comment type="alternative products">
    <event type="alternative splicing"/>
    <isoform>
        <id>Q9W0S8-1</id>
        <name evidence="10">B</name>
        <name evidence="10">D</name>
        <sequence type="displayed"/>
    </isoform>
    <isoform>
        <id>Q9W0S8-2</id>
        <name evidence="10">C</name>
        <sequence type="described" ref="VSP_058701"/>
    </isoform>
</comment>
<comment type="tissue specificity">
    <text evidence="2">In adult females, detected only in the abdomen with no expression in the head or thorax (at protein level).</text>
</comment>
<comment type="developmental stage">
    <text evidence="2">Expressed at high levels in early embryos but at low levels in larva, pupa and adult (at protein level).</text>
</comment>
<comment type="disruption phenotype">
    <text evidence="2 4 5">Mutants are viable but have greatly reduced levels of augmin complex subunit Dgt2 (PubMed:19289792). Mitotic progression is delayed but is not blocked before anaphase onset and chromosomes are properly segregated (PubMed:19289792). 7% of meiotic chromosomes in spermatids are missegregated (PubMed:19289792). Mutant males are fertile but mutant females are sterile, developing fully mature ovaries but laying eggs that fail to hatch (PubMed:19289792). Chromosome positioning and segregation are disrupted in oocytes (PubMed:19289792). Chromosome spreading in oocytes following nuclear envelope breakdown is not limited as in wild-type and instead is spread along the spindle axis (PubMed:23785300). Significant increase in the frequency of oocyte spindles with a missing or weak spindle pole (PubMed:23785300). Delayed spindle formation in spermatocytes during male meiosis (PubMed:24829288).</text>
</comment>